<comment type="function">
    <text evidence="1">Reversibly catalyzes the transfer of the carbamoyl group from carbamoyl phosphate (CP) to the N(epsilon) atom of ornithine (ORN) to produce L-citrulline.</text>
</comment>
<comment type="catalytic activity">
    <reaction>
        <text>carbamoyl phosphate + L-ornithine = L-citrulline + phosphate + H(+)</text>
        <dbReference type="Rhea" id="RHEA:19513"/>
        <dbReference type="ChEBI" id="CHEBI:15378"/>
        <dbReference type="ChEBI" id="CHEBI:43474"/>
        <dbReference type="ChEBI" id="CHEBI:46911"/>
        <dbReference type="ChEBI" id="CHEBI:57743"/>
        <dbReference type="ChEBI" id="CHEBI:58228"/>
        <dbReference type="EC" id="2.1.3.3"/>
    </reaction>
</comment>
<comment type="pathway">
    <text>Amino-acid degradation; L-arginine degradation via ADI pathway; carbamoyl phosphate from L-arginine: step 2/2.</text>
</comment>
<comment type="subcellular location">
    <subcellularLocation>
        <location evidence="4">Cytoplasm</location>
    </subcellularLocation>
</comment>
<comment type="similarity">
    <text evidence="4">Belongs to the aspartate/ornithine carbamoyltransferase superfamily. OTCase family.</text>
</comment>
<evidence type="ECO:0000250" key="1"/>
<evidence type="ECO:0000255" key="2">
    <source>
        <dbReference type="HAMAP-Rule" id="MF_01109"/>
    </source>
</evidence>
<evidence type="ECO:0000269" key="3">
    <source ref="2"/>
</evidence>
<evidence type="ECO:0000305" key="4"/>
<organism>
    <name type="scientific">Streptococcus pyogenes serotype M6 (strain ATCC BAA-946 / MGAS10394)</name>
    <dbReference type="NCBI Taxonomy" id="286636"/>
    <lineage>
        <taxon>Bacteria</taxon>
        <taxon>Bacillati</taxon>
        <taxon>Bacillota</taxon>
        <taxon>Bacilli</taxon>
        <taxon>Lactobacillales</taxon>
        <taxon>Streptococcaceae</taxon>
        <taxon>Streptococcus</taxon>
    </lineage>
</organism>
<dbReference type="EC" id="2.1.3.3"/>
<dbReference type="EMBL" id="CP000003">
    <property type="protein sequence ID" value="AAT87429.1"/>
    <property type="molecule type" value="Genomic_DNA"/>
</dbReference>
<dbReference type="SMR" id="Q5XAY4"/>
<dbReference type="KEGG" id="spa:M6_Spy1294"/>
<dbReference type="HOGENOM" id="CLU_043846_3_1_9"/>
<dbReference type="UniPathway" id="UPA00254">
    <property type="reaction ID" value="UER00365"/>
</dbReference>
<dbReference type="Proteomes" id="UP000001167">
    <property type="component" value="Chromosome"/>
</dbReference>
<dbReference type="GO" id="GO:0005737">
    <property type="term" value="C:cytoplasm"/>
    <property type="evidence" value="ECO:0007669"/>
    <property type="project" value="UniProtKB-SubCell"/>
</dbReference>
<dbReference type="GO" id="GO:0016597">
    <property type="term" value="F:amino acid binding"/>
    <property type="evidence" value="ECO:0007669"/>
    <property type="project" value="InterPro"/>
</dbReference>
<dbReference type="GO" id="GO:0004585">
    <property type="term" value="F:ornithine carbamoyltransferase activity"/>
    <property type="evidence" value="ECO:0007669"/>
    <property type="project" value="UniProtKB-UniRule"/>
</dbReference>
<dbReference type="GO" id="GO:0042450">
    <property type="term" value="P:arginine biosynthetic process via ornithine"/>
    <property type="evidence" value="ECO:0007669"/>
    <property type="project" value="TreeGrafter"/>
</dbReference>
<dbReference type="GO" id="GO:0019547">
    <property type="term" value="P:arginine catabolic process to ornithine"/>
    <property type="evidence" value="ECO:0007669"/>
    <property type="project" value="UniProtKB-UniPathway"/>
</dbReference>
<dbReference type="GO" id="GO:0019240">
    <property type="term" value="P:citrulline biosynthetic process"/>
    <property type="evidence" value="ECO:0007669"/>
    <property type="project" value="TreeGrafter"/>
</dbReference>
<dbReference type="GO" id="GO:0006526">
    <property type="term" value="P:L-arginine biosynthetic process"/>
    <property type="evidence" value="ECO:0007669"/>
    <property type="project" value="UniProtKB-UniRule"/>
</dbReference>
<dbReference type="FunFam" id="3.40.50.1370:FF:000004">
    <property type="entry name" value="Ornithine carbamoyltransferase"/>
    <property type="match status" value="1"/>
</dbReference>
<dbReference type="Gene3D" id="3.40.50.1370">
    <property type="entry name" value="Aspartate/ornithine carbamoyltransferase"/>
    <property type="match status" value="2"/>
</dbReference>
<dbReference type="HAMAP" id="MF_01109">
    <property type="entry name" value="OTCase"/>
    <property type="match status" value="1"/>
</dbReference>
<dbReference type="InterPro" id="IPR006132">
    <property type="entry name" value="Asp/Orn_carbamoyltranf_P-bd"/>
</dbReference>
<dbReference type="InterPro" id="IPR006130">
    <property type="entry name" value="Asp/Orn_carbamoylTrfase"/>
</dbReference>
<dbReference type="InterPro" id="IPR036901">
    <property type="entry name" value="Asp/Orn_carbamoylTrfase_sf"/>
</dbReference>
<dbReference type="InterPro" id="IPR006131">
    <property type="entry name" value="Asp_carbamoyltransf_Asp/Orn-bd"/>
</dbReference>
<dbReference type="InterPro" id="IPR002292">
    <property type="entry name" value="Orn/put_carbamltrans"/>
</dbReference>
<dbReference type="InterPro" id="IPR024904">
    <property type="entry name" value="OTCase_ArgI"/>
</dbReference>
<dbReference type="NCBIfam" id="TIGR00658">
    <property type="entry name" value="orni_carb_tr"/>
    <property type="match status" value="1"/>
</dbReference>
<dbReference type="NCBIfam" id="NF001986">
    <property type="entry name" value="PRK00779.1"/>
    <property type="match status" value="1"/>
</dbReference>
<dbReference type="PANTHER" id="PTHR45753:SF1">
    <property type="entry name" value="ORNITHINE CARBAMOYLTRANSFERASE, CATABOLIC"/>
    <property type="match status" value="1"/>
</dbReference>
<dbReference type="PANTHER" id="PTHR45753">
    <property type="entry name" value="ORNITHINE CARBAMOYLTRANSFERASE, MITOCHONDRIAL"/>
    <property type="match status" value="1"/>
</dbReference>
<dbReference type="Pfam" id="PF00185">
    <property type="entry name" value="OTCace"/>
    <property type="match status" value="1"/>
</dbReference>
<dbReference type="Pfam" id="PF02729">
    <property type="entry name" value="OTCace_N"/>
    <property type="match status" value="1"/>
</dbReference>
<dbReference type="PRINTS" id="PR00100">
    <property type="entry name" value="AOTCASE"/>
</dbReference>
<dbReference type="PRINTS" id="PR00102">
    <property type="entry name" value="OTCASE"/>
</dbReference>
<dbReference type="SUPFAM" id="SSF53671">
    <property type="entry name" value="Aspartate/ornithine carbamoyltransferase"/>
    <property type="match status" value="1"/>
</dbReference>
<dbReference type="PROSITE" id="PS00097">
    <property type="entry name" value="CARBAMOYLTRANSFERASE"/>
    <property type="match status" value="1"/>
</dbReference>
<keyword id="KW-0056">Arginine metabolism</keyword>
<keyword id="KW-0963">Cytoplasm</keyword>
<keyword id="KW-0903">Direct protein sequencing</keyword>
<keyword id="KW-0808">Transferase</keyword>
<reference key="1">
    <citation type="journal article" date="2004" name="J. Infect. Dis.">
        <title>Progress toward characterization of the group A Streptococcus metagenome: complete genome sequence of a macrolide-resistant serotype M6 strain.</title>
        <authorList>
            <person name="Banks D.J."/>
            <person name="Porcella S.F."/>
            <person name="Barbian K.D."/>
            <person name="Beres S.B."/>
            <person name="Philips L.E."/>
            <person name="Voyich J.M."/>
            <person name="DeLeo F.R."/>
            <person name="Martin J.M."/>
            <person name="Somerville G.A."/>
            <person name="Musser J.M."/>
        </authorList>
    </citation>
    <scope>NUCLEOTIDE SEQUENCE [LARGE SCALE GENOMIC DNA]</scope>
    <source>
        <strain>ATCC BAA-946 / MGAS10394</strain>
    </source>
</reference>
<reference key="2">
    <citation type="submission" date="2000-05" db="UniProtKB">
        <title>Two-dimensional gel electrophoresis map of Streptococcus pyogenes proteins.</title>
        <authorList>
            <person name="Hogan D.A."/>
            <person name="Du P."/>
            <person name="Stevenson T.I."/>
            <person name="Whitton M."/>
            <person name="Kilby G.W."/>
            <person name="Rogers J."/>
            <person name="VanBogelen R.A."/>
        </authorList>
    </citation>
    <scope>PROTEIN SEQUENCE OF 2-32; 37-59; 62-87 AND 101-108</scope>
    <scope>IDENTIFICATION BY MASS SPECTROMETRY</scope>
    <source>
        <strain>JRS4 / Serotype M6</strain>
    </source>
</reference>
<feature type="initiator methionine" description="Removed" evidence="3">
    <location>
        <position position="1"/>
    </location>
</feature>
<feature type="chain" id="PRO_0000113040" description="Ornithine carbamoyltransferase, catabolic">
    <location>
        <begin position="2"/>
        <end position="337"/>
    </location>
</feature>
<feature type="binding site" evidence="2">
    <location>
        <begin position="57"/>
        <end position="60"/>
    </location>
    <ligand>
        <name>carbamoyl phosphate</name>
        <dbReference type="ChEBI" id="CHEBI:58228"/>
    </ligand>
</feature>
<feature type="binding site" evidence="2">
    <location>
        <position position="84"/>
    </location>
    <ligand>
        <name>carbamoyl phosphate</name>
        <dbReference type="ChEBI" id="CHEBI:58228"/>
    </ligand>
</feature>
<feature type="binding site" evidence="2">
    <location>
        <position position="108"/>
    </location>
    <ligand>
        <name>carbamoyl phosphate</name>
        <dbReference type="ChEBI" id="CHEBI:58228"/>
    </ligand>
</feature>
<feature type="binding site" evidence="2">
    <location>
        <begin position="135"/>
        <end position="138"/>
    </location>
    <ligand>
        <name>carbamoyl phosphate</name>
        <dbReference type="ChEBI" id="CHEBI:58228"/>
    </ligand>
</feature>
<feature type="binding site" evidence="2">
    <location>
        <position position="167"/>
    </location>
    <ligand>
        <name>L-ornithine</name>
        <dbReference type="ChEBI" id="CHEBI:46911"/>
    </ligand>
</feature>
<feature type="binding site" evidence="2">
    <location>
        <position position="231"/>
    </location>
    <ligand>
        <name>L-ornithine</name>
        <dbReference type="ChEBI" id="CHEBI:46911"/>
    </ligand>
</feature>
<feature type="binding site" evidence="2">
    <location>
        <begin position="235"/>
        <end position="236"/>
    </location>
    <ligand>
        <name>L-ornithine</name>
        <dbReference type="ChEBI" id="CHEBI:46911"/>
    </ligand>
</feature>
<feature type="binding site" evidence="2">
    <location>
        <begin position="272"/>
        <end position="273"/>
    </location>
    <ligand>
        <name>carbamoyl phosphate</name>
        <dbReference type="ChEBI" id="CHEBI:58228"/>
    </ligand>
</feature>
<feature type="binding site" evidence="2">
    <location>
        <position position="317"/>
    </location>
    <ligand>
        <name>carbamoyl phosphate</name>
        <dbReference type="ChEBI" id="CHEBI:58228"/>
    </ligand>
</feature>
<protein>
    <recommendedName>
        <fullName>Ornithine carbamoyltransferase, catabolic</fullName>
        <shortName>OTCase</shortName>
        <ecNumber>2.1.3.3</ecNumber>
    </recommendedName>
</protein>
<name>OTCC_STRP6</name>
<proteinExistence type="evidence at protein level"/>
<gene>
    <name type="primary">arcB</name>
    <name type="ordered locus">M6_Spy1294</name>
</gene>
<sequence>MTQVFQGRSFLAEKDFTRAELEYLIDFSAHLKDLKKRGVPHHYLEGKNIALLFEKTSTRTRAAFTTAAIDLGAHPEYLGANDIQLGKKESTEDTAKVLGRMFDGIEFRGFSQRMVEELAEFSGVPVWNGLTDEWHPTQMLADYLTVKENFGKLEGLTLVYCGDGRNNVANSLLVTGAILGVNVHIFSPKELFPEEEIVTLAEGYAKESGARILITEDADEAVKGADVLYTDVWVSMGEEDKFKERVELLQPYQVNMDLVQKAGNDKLIFLHCLPAFHDTNTVYGKDVAEKFGVKEMEVTDEVFRSKYARHFDQAENRMHTIKAVMAATLGNLFIPKV</sequence>
<accession>Q5XAY4</accession>